<comment type="function">
    <text evidence="1">Catalyzes the GTP-dependent ribosomal translocation step during translation elongation. During this step, the ribosome changes from the pre-translocational (PRE) to the post-translocational (POST) state as the newly formed A-site-bound peptidyl-tRNA and P-site-bound deacylated tRNA move to the P and E sites, respectively. Catalyzes the coordinated movement of the two tRNA molecules, the mRNA and conformational changes in the ribosome.</text>
</comment>
<comment type="subcellular location">
    <subcellularLocation>
        <location evidence="1">Cytoplasm</location>
    </subcellularLocation>
</comment>
<comment type="similarity">
    <text evidence="1">Belongs to the TRAFAC class translation factor GTPase superfamily. Classic translation factor GTPase family. EF-G/EF-2 subfamily.</text>
</comment>
<gene>
    <name evidence="1" type="primary">fusA</name>
    <name type="ordered locus">CLD_1021</name>
</gene>
<sequence length="689" mass="76427">MANKEYPLAKFRNIGIMAHIDAGKTTATERILFYTGKTHKIGETHEGAATMDWMEQEQERGITITSAATTCFWKDHQVNIIDTPGHVDFTVEVERSLRVLDGAVTILDAKSGVEPQTETVWRQADNYKVPRMVFINKMDKLGADFLMSVGTLRERLHANAVPLQLPIGAEDSFSGIIDLVKNDAIIYKDDLGTVMDETEIPEDMKEMAEEYRTMLLEAVAEVDEDIMMKYLEGEEISVEEIKTALRKGVLANKIVPVLCGSAYKNKGVQLLLDAIIEFMPSPLDIEDVKGTEPTTGEEMTRPADAKAPLAALAFKIATDPFIGKLAFTRIYSGTMKSGTYVFNSNKGKRERIGRLVKMHANHREDVEELKAGELGAIVGLKDTTTGDTLCDDADPIILENMEFPEPVIDVSIEPKTKAGQEKMGIALAKLAEEDPTFRTYTNQETGQTIIAGMGELHLEIIVDRLIREFKVECNVGQPQVAYKETIKKHVKAEGKFIRQSGGRGQYGHCWIEMMPTEGEYEFQNAVVGGSIPKEYIPAIDNGIQEASQSGIIAGYPVINFKVKLFDGSYHDVDSSEMAFKIAGSMAFKNAMSKADAVLLEPSMKVEVVVPEEYMGDVIGDINSRRGRIEGMTPRAGAEVIRAFVPLSEMFGYATTLRSKTQGRGNYVMQFDHYEEVPKSIQDKVIGERK</sequence>
<organism>
    <name type="scientific">Clostridium botulinum (strain Okra / Type B1)</name>
    <dbReference type="NCBI Taxonomy" id="498213"/>
    <lineage>
        <taxon>Bacteria</taxon>
        <taxon>Bacillati</taxon>
        <taxon>Bacillota</taxon>
        <taxon>Clostridia</taxon>
        <taxon>Eubacteriales</taxon>
        <taxon>Clostridiaceae</taxon>
        <taxon>Clostridium</taxon>
    </lineage>
</organism>
<accession>B1IGF7</accession>
<reference key="1">
    <citation type="journal article" date="2007" name="PLoS ONE">
        <title>Analysis of the neurotoxin complex genes in Clostridium botulinum A1-A4 and B1 strains: BoNT/A3, /Ba4 and /B1 clusters are located within plasmids.</title>
        <authorList>
            <person name="Smith T.J."/>
            <person name="Hill K.K."/>
            <person name="Foley B.T."/>
            <person name="Detter J.C."/>
            <person name="Munk A.C."/>
            <person name="Bruce D.C."/>
            <person name="Doggett N.A."/>
            <person name="Smith L.A."/>
            <person name="Marks J.D."/>
            <person name="Xie G."/>
            <person name="Brettin T.S."/>
        </authorList>
    </citation>
    <scope>NUCLEOTIDE SEQUENCE [LARGE SCALE GENOMIC DNA]</scope>
    <source>
        <strain>Okra / Type B1</strain>
    </source>
</reference>
<name>EFG_CLOBK</name>
<dbReference type="EMBL" id="CP000939">
    <property type="protein sequence ID" value="ACA45269.1"/>
    <property type="molecule type" value="Genomic_DNA"/>
</dbReference>
<dbReference type="SMR" id="B1IGF7"/>
<dbReference type="KEGG" id="cbb:CLD_1021"/>
<dbReference type="HOGENOM" id="CLU_002794_4_1_9"/>
<dbReference type="Proteomes" id="UP000008541">
    <property type="component" value="Chromosome"/>
</dbReference>
<dbReference type="GO" id="GO:0005737">
    <property type="term" value="C:cytoplasm"/>
    <property type="evidence" value="ECO:0007669"/>
    <property type="project" value="UniProtKB-SubCell"/>
</dbReference>
<dbReference type="GO" id="GO:0005525">
    <property type="term" value="F:GTP binding"/>
    <property type="evidence" value="ECO:0007669"/>
    <property type="project" value="UniProtKB-UniRule"/>
</dbReference>
<dbReference type="GO" id="GO:0003924">
    <property type="term" value="F:GTPase activity"/>
    <property type="evidence" value="ECO:0007669"/>
    <property type="project" value="InterPro"/>
</dbReference>
<dbReference type="GO" id="GO:0003746">
    <property type="term" value="F:translation elongation factor activity"/>
    <property type="evidence" value="ECO:0007669"/>
    <property type="project" value="UniProtKB-UniRule"/>
</dbReference>
<dbReference type="GO" id="GO:0032790">
    <property type="term" value="P:ribosome disassembly"/>
    <property type="evidence" value="ECO:0007669"/>
    <property type="project" value="TreeGrafter"/>
</dbReference>
<dbReference type="CDD" id="cd01886">
    <property type="entry name" value="EF-G"/>
    <property type="match status" value="1"/>
</dbReference>
<dbReference type="CDD" id="cd16262">
    <property type="entry name" value="EFG_III"/>
    <property type="match status" value="1"/>
</dbReference>
<dbReference type="CDD" id="cd01434">
    <property type="entry name" value="EFG_mtEFG1_IV"/>
    <property type="match status" value="1"/>
</dbReference>
<dbReference type="CDD" id="cd03713">
    <property type="entry name" value="EFG_mtEFG_C"/>
    <property type="match status" value="1"/>
</dbReference>
<dbReference type="CDD" id="cd04088">
    <property type="entry name" value="EFG_mtEFG_II"/>
    <property type="match status" value="1"/>
</dbReference>
<dbReference type="FunFam" id="2.40.30.10:FF:000006">
    <property type="entry name" value="Elongation factor G"/>
    <property type="match status" value="1"/>
</dbReference>
<dbReference type="FunFam" id="3.30.230.10:FF:000003">
    <property type="entry name" value="Elongation factor G"/>
    <property type="match status" value="1"/>
</dbReference>
<dbReference type="FunFam" id="3.30.70.240:FF:000001">
    <property type="entry name" value="Elongation factor G"/>
    <property type="match status" value="1"/>
</dbReference>
<dbReference type="FunFam" id="3.30.70.870:FF:000001">
    <property type="entry name" value="Elongation factor G"/>
    <property type="match status" value="1"/>
</dbReference>
<dbReference type="FunFam" id="3.40.50.300:FF:000029">
    <property type="entry name" value="Elongation factor G"/>
    <property type="match status" value="1"/>
</dbReference>
<dbReference type="Gene3D" id="3.30.230.10">
    <property type="match status" value="1"/>
</dbReference>
<dbReference type="Gene3D" id="3.30.70.240">
    <property type="match status" value="1"/>
</dbReference>
<dbReference type="Gene3D" id="3.30.70.870">
    <property type="entry name" value="Elongation Factor G (Translational Gtpase), domain 3"/>
    <property type="match status" value="1"/>
</dbReference>
<dbReference type="Gene3D" id="3.40.50.300">
    <property type="entry name" value="P-loop containing nucleotide triphosphate hydrolases"/>
    <property type="match status" value="1"/>
</dbReference>
<dbReference type="Gene3D" id="2.40.30.10">
    <property type="entry name" value="Translation factors"/>
    <property type="match status" value="1"/>
</dbReference>
<dbReference type="HAMAP" id="MF_00054_B">
    <property type="entry name" value="EF_G_EF_2_B"/>
    <property type="match status" value="1"/>
</dbReference>
<dbReference type="InterPro" id="IPR053905">
    <property type="entry name" value="EF-G-like_DII"/>
</dbReference>
<dbReference type="InterPro" id="IPR041095">
    <property type="entry name" value="EFG_II"/>
</dbReference>
<dbReference type="InterPro" id="IPR009022">
    <property type="entry name" value="EFG_III"/>
</dbReference>
<dbReference type="InterPro" id="IPR035647">
    <property type="entry name" value="EFG_III/V"/>
</dbReference>
<dbReference type="InterPro" id="IPR047872">
    <property type="entry name" value="EFG_IV"/>
</dbReference>
<dbReference type="InterPro" id="IPR035649">
    <property type="entry name" value="EFG_V"/>
</dbReference>
<dbReference type="InterPro" id="IPR000640">
    <property type="entry name" value="EFG_V-like"/>
</dbReference>
<dbReference type="InterPro" id="IPR031157">
    <property type="entry name" value="G_TR_CS"/>
</dbReference>
<dbReference type="InterPro" id="IPR027417">
    <property type="entry name" value="P-loop_NTPase"/>
</dbReference>
<dbReference type="InterPro" id="IPR020568">
    <property type="entry name" value="Ribosomal_Su5_D2-typ_SF"/>
</dbReference>
<dbReference type="InterPro" id="IPR014721">
    <property type="entry name" value="Ribsml_uS5_D2-typ_fold_subgr"/>
</dbReference>
<dbReference type="InterPro" id="IPR005225">
    <property type="entry name" value="Small_GTP-bd"/>
</dbReference>
<dbReference type="InterPro" id="IPR000795">
    <property type="entry name" value="T_Tr_GTP-bd_dom"/>
</dbReference>
<dbReference type="InterPro" id="IPR009000">
    <property type="entry name" value="Transl_B-barrel_sf"/>
</dbReference>
<dbReference type="InterPro" id="IPR004540">
    <property type="entry name" value="Transl_elong_EFG/EF2"/>
</dbReference>
<dbReference type="InterPro" id="IPR005517">
    <property type="entry name" value="Transl_elong_EFG/EF2_IV"/>
</dbReference>
<dbReference type="NCBIfam" id="TIGR00484">
    <property type="entry name" value="EF-G"/>
    <property type="match status" value="1"/>
</dbReference>
<dbReference type="NCBIfam" id="NF009379">
    <property type="entry name" value="PRK12740.1-3"/>
    <property type="match status" value="1"/>
</dbReference>
<dbReference type="NCBIfam" id="NF009381">
    <property type="entry name" value="PRK12740.1-5"/>
    <property type="match status" value="1"/>
</dbReference>
<dbReference type="NCBIfam" id="TIGR00231">
    <property type="entry name" value="small_GTP"/>
    <property type="match status" value="1"/>
</dbReference>
<dbReference type="PANTHER" id="PTHR43261:SF1">
    <property type="entry name" value="RIBOSOME-RELEASING FACTOR 2, MITOCHONDRIAL"/>
    <property type="match status" value="1"/>
</dbReference>
<dbReference type="PANTHER" id="PTHR43261">
    <property type="entry name" value="TRANSLATION ELONGATION FACTOR G-RELATED"/>
    <property type="match status" value="1"/>
</dbReference>
<dbReference type="Pfam" id="PF22042">
    <property type="entry name" value="EF-G_D2"/>
    <property type="match status" value="1"/>
</dbReference>
<dbReference type="Pfam" id="PF00679">
    <property type="entry name" value="EFG_C"/>
    <property type="match status" value="1"/>
</dbReference>
<dbReference type="Pfam" id="PF14492">
    <property type="entry name" value="EFG_III"/>
    <property type="match status" value="1"/>
</dbReference>
<dbReference type="Pfam" id="PF03764">
    <property type="entry name" value="EFG_IV"/>
    <property type="match status" value="1"/>
</dbReference>
<dbReference type="Pfam" id="PF00009">
    <property type="entry name" value="GTP_EFTU"/>
    <property type="match status" value="1"/>
</dbReference>
<dbReference type="PRINTS" id="PR00315">
    <property type="entry name" value="ELONGATNFCT"/>
</dbReference>
<dbReference type="SMART" id="SM00838">
    <property type="entry name" value="EFG_C"/>
    <property type="match status" value="1"/>
</dbReference>
<dbReference type="SMART" id="SM00889">
    <property type="entry name" value="EFG_IV"/>
    <property type="match status" value="1"/>
</dbReference>
<dbReference type="SUPFAM" id="SSF54980">
    <property type="entry name" value="EF-G C-terminal domain-like"/>
    <property type="match status" value="2"/>
</dbReference>
<dbReference type="SUPFAM" id="SSF52540">
    <property type="entry name" value="P-loop containing nucleoside triphosphate hydrolases"/>
    <property type="match status" value="1"/>
</dbReference>
<dbReference type="SUPFAM" id="SSF54211">
    <property type="entry name" value="Ribosomal protein S5 domain 2-like"/>
    <property type="match status" value="1"/>
</dbReference>
<dbReference type="SUPFAM" id="SSF50447">
    <property type="entry name" value="Translation proteins"/>
    <property type="match status" value="1"/>
</dbReference>
<dbReference type="PROSITE" id="PS00301">
    <property type="entry name" value="G_TR_1"/>
    <property type="match status" value="1"/>
</dbReference>
<dbReference type="PROSITE" id="PS51722">
    <property type="entry name" value="G_TR_2"/>
    <property type="match status" value="1"/>
</dbReference>
<keyword id="KW-0963">Cytoplasm</keyword>
<keyword id="KW-0251">Elongation factor</keyword>
<keyword id="KW-0342">GTP-binding</keyword>
<keyword id="KW-0547">Nucleotide-binding</keyword>
<keyword id="KW-0648">Protein biosynthesis</keyword>
<protein>
    <recommendedName>
        <fullName evidence="1">Elongation factor G</fullName>
        <shortName evidence="1">EF-G</shortName>
    </recommendedName>
</protein>
<proteinExistence type="inferred from homology"/>
<feature type="chain" id="PRO_0000335843" description="Elongation factor G">
    <location>
        <begin position="1"/>
        <end position="689"/>
    </location>
</feature>
<feature type="domain" description="tr-type G">
    <location>
        <begin position="9"/>
        <end position="283"/>
    </location>
</feature>
<feature type="binding site" evidence="1">
    <location>
        <begin position="18"/>
        <end position="25"/>
    </location>
    <ligand>
        <name>GTP</name>
        <dbReference type="ChEBI" id="CHEBI:37565"/>
    </ligand>
</feature>
<feature type="binding site" evidence="1">
    <location>
        <begin position="82"/>
        <end position="86"/>
    </location>
    <ligand>
        <name>GTP</name>
        <dbReference type="ChEBI" id="CHEBI:37565"/>
    </ligand>
</feature>
<feature type="binding site" evidence="1">
    <location>
        <begin position="136"/>
        <end position="139"/>
    </location>
    <ligand>
        <name>GTP</name>
        <dbReference type="ChEBI" id="CHEBI:37565"/>
    </ligand>
</feature>
<evidence type="ECO:0000255" key="1">
    <source>
        <dbReference type="HAMAP-Rule" id="MF_00054"/>
    </source>
</evidence>